<keyword id="KW-0328">Glycosyltransferase</keyword>
<keyword id="KW-0479">Metal-binding</keyword>
<keyword id="KW-0671">Queuosine biosynthesis</keyword>
<keyword id="KW-0808">Transferase</keyword>
<keyword id="KW-0819">tRNA processing</keyword>
<keyword id="KW-0862">Zinc</keyword>
<protein>
    <recommendedName>
        <fullName evidence="1">Queuine tRNA-ribosyltransferase</fullName>
        <ecNumber evidence="1">2.4.2.29</ecNumber>
    </recommendedName>
    <alternativeName>
        <fullName evidence="1">Guanine insertion enzyme</fullName>
    </alternativeName>
    <alternativeName>
        <fullName evidence="1">tRNA-guanine transglycosylase</fullName>
    </alternativeName>
</protein>
<dbReference type="EC" id="2.4.2.29" evidence="1"/>
<dbReference type="EMBL" id="CP001227">
    <property type="protein sequence ID" value="ACR47183.1"/>
    <property type="molecule type" value="Genomic_DNA"/>
</dbReference>
<dbReference type="RefSeq" id="WP_012736470.1">
    <property type="nucleotide sequence ID" value="NC_012730.1"/>
</dbReference>
<dbReference type="SMR" id="C4K0T2"/>
<dbReference type="KEGG" id="rpk:RPR_01385"/>
<dbReference type="HOGENOM" id="CLU_022060_0_1_5"/>
<dbReference type="UniPathway" id="UPA00392"/>
<dbReference type="Proteomes" id="UP000005015">
    <property type="component" value="Chromosome"/>
</dbReference>
<dbReference type="GO" id="GO:0005737">
    <property type="term" value="C:cytoplasm"/>
    <property type="evidence" value="ECO:0007669"/>
    <property type="project" value="TreeGrafter"/>
</dbReference>
<dbReference type="GO" id="GO:0046872">
    <property type="term" value="F:metal ion binding"/>
    <property type="evidence" value="ECO:0007669"/>
    <property type="project" value="UniProtKB-KW"/>
</dbReference>
<dbReference type="GO" id="GO:0008479">
    <property type="term" value="F:tRNA-guanosine(34) queuine transglycosylase activity"/>
    <property type="evidence" value="ECO:0007669"/>
    <property type="project" value="UniProtKB-UniRule"/>
</dbReference>
<dbReference type="GO" id="GO:0008616">
    <property type="term" value="P:queuosine biosynthetic process"/>
    <property type="evidence" value="ECO:0007669"/>
    <property type="project" value="UniProtKB-UniRule"/>
</dbReference>
<dbReference type="GO" id="GO:0002099">
    <property type="term" value="P:tRNA wobble guanine modification"/>
    <property type="evidence" value="ECO:0007669"/>
    <property type="project" value="TreeGrafter"/>
</dbReference>
<dbReference type="GO" id="GO:0101030">
    <property type="term" value="P:tRNA-guanine transglycosylation"/>
    <property type="evidence" value="ECO:0007669"/>
    <property type="project" value="InterPro"/>
</dbReference>
<dbReference type="FunFam" id="3.20.20.105:FF:000001">
    <property type="entry name" value="Queuine tRNA-ribosyltransferase"/>
    <property type="match status" value="1"/>
</dbReference>
<dbReference type="Gene3D" id="3.20.20.105">
    <property type="entry name" value="Queuine tRNA-ribosyltransferase-like"/>
    <property type="match status" value="1"/>
</dbReference>
<dbReference type="HAMAP" id="MF_00168">
    <property type="entry name" value="Q_tRNA_Tgt"/>
    <property type="match status" value="1"/>
</dbReference>
<dbReference type="InterPro" id="IPR050076">
    <property type="entry name" value="ArchSynthase1/Queuine_TRR"/>
</dbReference>
<dbReference type="InterPro" id="IPR004803">
    <property type="entry name" value="TGT"/>
</dbReference>
<dbReference type="InterPro" id="IPR036511">
    <property type="entry name" value="TGT-like_sf"/>
</dbReference>
<dbReference type="InterPro" id="IPR002616">
    <property type="entry name" value="tRNA_ribo_trans-like"/>
</dbReference>
<dbReference type="NCBIfam" id="TIGR00430">
    <property type="entry name" value="Q_tRNA_tgt"/>
    <property type="match status" value="1"/>
</dbReference>
<dbReference type="NCBIfam" id="TIGR00449">
    <property type="entry name" value="tgt_general"/>
    <property type="match status" value="1"/>
</dbReference>
<dbReference type="PANTHER" id="PTHR46499">
    <property type="entry name" value="QUEUINE TRNA-RIBOSYLTRANSFERASE"/>
    <property type="match status" value="1"/>
</dbReference>
<dbReference type="PANTHER" id="PTHR46499:SF1">
    <property type="entry name" value="QUEUINE TRNA-RIBOSYLTRANSFERASE"/>
    <property type="match status" value="1"/>
</dbReference>
<dbReference type="Pfam" id="PF01702">
    <property type="entry name" value="TGT"/>
    <property type="match status" value="1"/>
</dbReference>
<dbReference type="SUPFAM" id="SSF51713">
    <property type="entry name" value="tRNA-guanine transglycosylase"/>
    <property type="match status" value="1"/>
</dbReference>
<reference key="1">
    <citation type="journal article" date="2009" name="PLoS ONE">
        <title>Genome sequence of the endosymbiont Rickettsia peacockii and comparison with virulent Rickettsia rickettsii: identification of virulence factors.</title>
        <authorList>
            <person name="Felsheim R.F."/>
            <person name="Kurtti T.J."/>
            <person name="Munderloh U.G."/>
        </authorList>
    </citation>
    <scope>NUCLEOTIDE SEQUENCE [LARGE SCALE GENOMIC DNA]</scope>
    <source>
        <strain>Rustic</strain>
    </source>
</reference>
<comment type="function">
    <text evidence="1">Catalyzes the base-exchange of a guanine (G) residue with the queuine precursor 7-aminomethyl-7-deazaguanine (PreQ1) at position 34 (anticodon wobble position) in tRNAs with GU(N) anticodons (tRNA-Asp, -Asn, -His and -Tyr). Catalysis occurs through a double-displacement mechanism. The nucleophile active site attacks the C1' of nucleotide 34 to detach the guanine base from the RNA, forming a covalent enzyme-RNA intermediate. The proton acceptor active site deprotonates the incoming PreQ1, allowing a nucleophilic attack on the C1' of the ribose to form the product. After dissociation, two additional enzymatic reactions on the tRNA convert PreQ1 to queuine (Q), resulting in the hypermodified nucleoside queuosine (7-(((4,5-cis-dihydroxy-2-cyclopenten-1-yl)amino)methyl)-7-deazaguanosine).</text>
</comment>
<comment type="catalytic activity">
    <reaction evidence="1">
        <text>7-aminomethyl-7-carbaguanine + guanosine(34) in tRNA = 7-aminomethyl-7-carbaguanosine(34) in tRNA + guanine</text>
        <dbReference type="Rhea" id="RHEA:24104"/>
        <dbReference type="Rhea" id="RHEA-COMP:10341"/>
        <dbReference type="Rhea" id="RHEA-COMP:10342"/>
        <dbReference type="ChEBI" id="CHEBI:16235"/>
        <dbReference type="ChEBI" id="CHEBI:58703"/>
        <dbReference type="ChEBI" id="CHEBI:74269"/>
        <dbReference type="ChEBI" id="CHEBI:82833"/>
        <dbReference type="EC" id="2.4.2.29"/>
    </reaction>
</comment>
<comment type="cofactor">
    <cofactor evidence="1">
        <name>Zn(2+)</name>
        <dbReference type="ChEBI" id="CHEBI:29105"/>
    </cofactor>
    <text evidence="1">Binds 1 zinc ion per subunit.</text>
</comment>
<comment type="pathway">
    <text evidence="1">tRNA modification; tRNA-queuosine biosynthesis.</text>
</comment>
<comment type="subunit">
    <text evidence="1">Homodimer. Within each dimer, one monomer is responsible for RNA recognition and catalysis, while the other monomer binds to the replacement base PreQ1.</text>
</comment>
<comment type="similarity">
    <text evidence="1">Belongs to the queuine tRNA-ribosyltransferase family.</text>
</comment>
<gene>
    <name evidence="1" type="primary">tgt</name>
    <name type="ordered locus">RPR_01385</name>
</gene>
<sequence length="361" mass="40576">MSKFSFNIYHQHKKARSGIIVTAHGEMRTPAFMPVGTRGTVKAMLPESVAETGADILLGNTYHLMLQPTAERIVQLGGLHKFMNWDKPILTDSGGFQVMSLSKLCKITEEGVSFSSHINGDKYMLTPERSTEIQYLLGSTITMAFDECTPYPATFEEAKTSMQLTTRWANRSRNAFVKREGYAQFGIIQGSVYEELREQSSKDLVELDFEGYAVGGLAVGEGQELMFKVLDYAPDFLPQNKPRYLMGVGKPADIIGAVSRGIDMFDCVIPTRSGRNGQAFTKYGTVNIRNSKYADDNKPLEHDCLCPACRNYSKAYLHHLVRIGEILGSMLMTWHNLTYFQNLMSRIRAYIKLGKDFDFDS</sequence>
<feature type="chain" id="PRO_1000203663" description="Queuine tRNA-ribosyltransferase">
    <location>
        <begin position="1"/>
        <end position="361"/>
    </location>
</feature>
<feature type="region of interest" description="RNA binding" evidence="1">
    <location>
        <begin position="247"/>
        <end position="253"/>
    </location>
</feature>
<feature type="region of interest" description="RNA binding; important for wobble base 34 recognition" evidence="1">
    <location>
        <begin position="271"/>
        <end position="275"/>
    </location>
</feature>
<feature type="active site" description="Proton acceptor" evidence="1">
    <location>
        <position position="92"/>
    </location>
</feature>
<feature type="active site" description="Nucleophile" evidence="1">
    <location>
        <position position="266"/>
    </location>
</feature>
<feature type="binding site" evidence="1">
    <location>
        <begin position="92"/>
        <end position="96"/>
    </location>
    <ligand>
        <name>substrate</name>
    </ligand>
</feature>
<feature type="binding site" evidence="1">
    <location>
        <position position="146"/>
    </location>
    <ligand>
        <name>substrate</name>
    </ligand>
</feature>
<feature type="binding site" evidence="1">
    <location>
        <position position="189"/>
    </location>
    <ligand>
        <name>substrate</name>
    </ligand>
</feature>
<feature type="binding site" evidence="1">
    <location>
        <position position="216"/>
    </location>
    <ligand>
        <name>substrate</name>
    </ligand>
</feature>
<feature type="binding site" evidence="1">
    <location>
        <position position="304"/>
    </location>
    <ligand>
        <name>Zn(2+)</name>
        <dbReference type="ChEBI" id="CHEBI:29105"/>
    </ligand>
</feature>
<feature type="binding site" evidence="1">
    <location>
        <position position="306"/>
    </location>
    <ligand>
        <name>Zn(2+)</name>
        <dbReference type="ChEBI" id="CHEBI:29105"/>
    </ligand>
</feature>
<feature type="binding site" evidence="1">
    <location>
        <position position="309"/>
    </location>
    <ligand>
        <name>Zn(2+)</name>
        <dbReference type="ChEBI" id="CHEBI:29105"/>
    </ligand>
</feature>
<feature type="binding site" evidence="1">
    <location>
        <position position="335"/>
    </location>
    <ligand>
        <name>Zn(2+)</name>
        <dbReference type="ChEBI" id="CHEBI:29105"/>
    </ligand>
</feature>
<name>TGT_RICPU</name>
<accession>C4K0T2</accession>
<organism>
    <name type="scientific">Rickettsia peacockii (strain Rustic)</name>
    <dbReference type="NCBI Taxonomy" id="562019"/>
    <lineage>
        <taxon>Bacteria</taxon>
        <taxon>Pseudomonadati</taxon>
        <taxon>Pseudomonadota</taxon>
        <taxon>Alphaproteobacteria</taxon>
        <taxon>Rickettsiales</taxon>
        <taxon>Rickettsiaceae</taxon>
        <taxon>Rickettsieae</taxon>
        <taxon>Rickettsia</taxon>
        <taxon>spotted fever group</taxon>
    </lineage>
</organism>
<evidence type="ECO:0000255" key="1">
    <source>
        <dbReference type="HAMAP-Rule" id="MF_00168"/>
    </source>
</evidence>
<proteinExistence type="inferred from homology"/>